<feature type="chain" id="PRO_0000232298" description="ATP-dependent RNA helicase rok1">
    <location>
        <begin position="1"/>
        <end position="739"/>
    </location>
</feature>
<feature type="domain" description="Helicase ATP-binding" evidence="2">
    <location>
        <begin position="237"/>
        <end position="449"/>
    </location>
</feature>
<feature type="domain" description="Helicase C-terminal" evidence="3">
    <location>
        <begin position="489"/>
        <end position="657"/>
    </location>
</feature>
<feature type="region of interest" description="Disordered" evidence="4">
    <location>
        <begin position="12"/>
        <end position="116"/>
    </location>
</feature>
<feature type="region of interest" description="Disordered" evidence="4">
    <location>
        <begin position="145"/>
        <end position="179"/>
    </location>
</feature>
<feature type="region of interest" description="Disordered" evidence="4">
    <location>
        <begin position="320"/>
        <end position="358"/>
    </location>
</feature>
<feature type="region of interest" description="Disordered" evidence="4">
    <location>
        <begin position="665"/>
        <end position="739"/>
    </location>
</feature>
<feature type="short sequence motif" description="Q motif">
    <location>
        <begin position="192"/>
        <end position="220"/>
    </location>
</feature>
<feature type="short sequence motif" description="DEAD box">
    <location>
        <begin position="396"/>
        <end position="399"/>
    </location>
</feature>
<feature type="compositionally biased region" description="Polar residues" evidence="4">
    <location>
        <begin position="18"/>
        <end position="29"/>
    </location>
</feature>
<feature type="compositionally biased region" description="Basic and acidic residues" evidence="4">
    <location>
        <begin position="43"/>
        <end position="54"/>
    </location>
</feature>
<feature type="compositionally biased region" description="Acidic residues" evidence="4">
    <location>
        <begin position="67"/>
        <end position="76"/>
    </location>
</feature>
<feature type="compositionally biased region" description="Basic and acidic residues" evidence="4">
    <location>
        <begin position="95"/>
        <end position="110"/>
    </location>
</feature>
<feature type="compositionally biased region" description="Acidic residues" evidence="4">
    <location>
        <begin position="323"/>
        <end position="346"/>
    </location>
</feature>
<feature type="compositionally biased region" description="Basic and acidic residues" evidence="4">
    <location>
        <begin position="699"/>
        <end position="708"/>
    </location>
</feature>
<feature type="compositionally biased region" description="Basic residues" evidence="4">
    <location>
        <begin position="709"/>
        <end position="721"/>
    </location>
</feature>
<feature type="compositionally biased region" description="Acidic residues" evidence="4">
    <location>
        <begin position="728"/>
        <end position="739"/>
    </location>
</feature>
<feature type="binding site" evidence="2">
    <location>
        <begin position="250"/>
        <end position="257"/>
    </location>
    <ligand>
        <name>ATP</name>
        <dbReference type="ChEBI" id="CHEBI:30616"/>
    </ligand>
</feature>
<comment type="function">
    <text>ATP-dependent RNA helicase involved in 40S ribosomal subunit biogenesis. Required for the processing and cleavage of 35S pre-rRNA at sites A0, A1, and A2, leading to mature 18S rRNA.</text>
</comment>
<comment type="catalytic activity">
    <reaction>
        <text>ATP + H2O = ADP + phosphate + H(+)</text>
        <dbReference type="Rhea" id="RHEA:13065"/>
        <dbReference type="ChEBI" id="CHEBI:15377"/>
        <dbReference type="ChEBI" id="CHEBI:15378"/>
        <dbReference type="ChEBI" id="CHEBI:30616"/>
        <dbReference type="ChEBI" id="CHEBI:43474"/>
        <dbReference type="ChEBI" id="CHEBI:456216"/>
        <dbReference type="EC" id="3.6.4.13"/>
    </reaction>
</comment>
<comment type="subunit">
    <text evidence="1">Interacts with the U3 snoRNA and is associated with the 90S and 40S pre-ribosomes.</text>
</comment>
<comment type="subcellular location">
    <subcellularLocation>
        <location evidence="1">Nucleus</location>
        <location evidence="1">Nucleolus</location>
    </subcellularLocation>
</comment>
<comment type="domain">
    <text>The Q motif is unique to and characteristic of the DEAD box family of RNA helicases and controls ATP binding and hydrolysis.</text>
</comment>
<comment type="similarity">
    <text evidence="5">Belongs to the DEAD box helicase family. DDX52/ROK1 subfamily.</text>
</comment>
<keyword id="KW-0067">ATP-binding</keyword>
<keyword id="KW-0347">Helicase</keyword>
<keyword id="KW-0378">Hydrolase</keyword>
<keyword id="KW-0547">Nucleotide-binding</keyword>
<keyword id="KW-0539">Nucleus</keyword>
<keyword id="KW-1185">Reference proteome</keyword>
<keyword id="KW-0690">Ribosome biogenesis</keyword>
<keyword id="KW-0694">RNA-binding</keyword>
<keyword id="KW-0698">rRNA processing</keyword>
<proteinExistence type="inferred from homology"/>
<protein>
    <recommendedName>
        <fullName>ATP-dependent RNA helicase rok1</fullName>
        <ecNumber>3.6.4.13</ecNumber>
    </recommendedName>
</protein>
<organism>
    <name type="scientific">Aspergillus fumigatus (strain ATCC MYA-4609 / CBS 101355 / FGSC A1100 / Af293)</name>
    <name type="common">Neosartorya fumigata</name>
    <dbReference type="NCBI Taxonomy" id="330879"/>
    <lineage>
        <taxon>Eukaryota</taxon>
        <taxon>Fungi</taxon>
        <taxon>Dikarya</taxon>
        <taxon>Ascomycota</taxon>
        <taxon>Pezizomycotina</taxon>
        <taxon>Eurotiomycetes</taxon>
        <taxon>Eurotiomycetidae</taxon>
        <taxon>Eurotiales</taxon>
        <taxon>Aspergillaceae</taxon>
        <taxon>Aspergillus</taxon>
        <taxon>Aspergillus subgen. Fumigati</taxon>
    </lineage>
</organism>
<evidence type="ECO:0000250" key="1"/>
<evidence type="ECO:0000255" key="2">
    <source>
        <dbReference type="PROSITE-ProRule" id="PRU00541"/>
    </source>
</evidence>
<evidence type="ECO:0000255" key="3">
    <source>
        <dbReference type="PROSITE-ProRule" id="PRU00542"/>
    </source>
</evidence>
<evidence type="ECO:0000256" key="4">
    <source>
        <dbReference type="SAM" id="MobiDB-lite"/>
    </source>
</evidence>
<evidence type="ECO:0000305" key="5"/>
<accession>Q4WRH5</accession>
<sequence>MDAFKLLTRATKLKSGAAPSSTQSLTRLPSTGKAANPQLFRSSEADKVLEEASHGKKRKRVAGPEAAELDDDDDAELNFFGSSKARRSSASMAKEQAKEQQEQQEHRDDTSDADDVDEMDEVQCRTVLNAHKIKVTDMRDLEEIQPVRIESEEPKKKKKKTKQQEESTPALTKKEQKKARRVYPQPLVSFKELRTRYKISRRLAENIAEQGFTVPTEVQLGTLPLLLGGFKASGNSKSAESIEPDLLVVAPTGSGKTLSFLIPVINKIVRHHHEQEKERGIFSVIVAPTKELASQIVNEGRKLVHGTGVKITLMKKGMRVVDREDDDDENSHSEDSEEGSDSEQDEPSTTRKKKGKAPITKSDILVTTPLLLVNALSANRTKPMATLPLVRNIVLDEADVLLDELFREQTLDIWRACTHPELRASLWSATMGSNIEDLAKSTIKERKQAYDQTKSYPLLRLVVGLKDSAIPNIEHKLVYAATEQGKLLGLRQLLHPAAASVSDVRLRPPFLIFTQTIPRAIALHSELRYDIPAEAGGSSRIAVLHSDLSDGQRSEIMKNFRKGEIWILVTTDLLARGVDFRGINGVVNYDIPNSAAVYVHRVGRTGRAGREGGIAVTYYTKEDIPYVKSIANIIDVSEKLRGKDGEKSIQKWLLDALPDLSKKDKKELKKHGVKARQSTLKSVKDDKEHRRTRISTKSGYDRRMENKKKALIAASRNRKSKTQSTDPGSDDESWDGLDG</sequence>
<dbReference type="EC" id="3.6.4.13"/>
<dbReference type="EMBL" id="AAHF01000004">
    <property type="protein sequence ID" value="EAL90957.1"/>
    <property type="molecule type" value="Genomic_DNA"/>
</dbReference>
<dbReference type="RefSeq" id="XP_752995.1">
    <property type="nucleotide sequence ID" value="XM_747902.1"/>
</dbReference>
<dbReference type="SMR" id="Q4WRH5"/>
<dbReference type="FunCoup" id="Q4WRH5">
    <property type="interactions" value="1021"/>
</dbReference>
<dbReference type="STRING" id="330879.Q4WRH5"/>
<dbReference type="EnsemblFungi" id="EAL90957">
    <property type="protein sequence ID" value="EAL90957"/>
    <property type="gene ID" value="AFUA_1G16290"/>
</dbReference>
<dbReference type="GeneID" id="3510020"/>
<dbReference type="KEGG" id="afm:AFUA_1G16290"/>
<dbReference type="VEuPathDB" id="FungiDB:Afu1g16290"/>
<dbReference type="eggNOG" id="KOG0344">
    <property type="taxonomic scope" value="Eukaryota"/>
</dbReference>
<dbReference type="HOGENOM" id="CLU_003041_1_4_1"/>
<dbReference type="InParanoid" id="Q4WRH5"/>
<dbReference type="OMA" id="FRAGEIW"/>
<dbReference type="OrthoDB" id="360161at2759"/>
<dbReference type="Proteomes" id="UP000002530">
    <property type="component" value="Chromosome 1"/>
</dbReference>
<dbReference type="GO" id="GO:0005730">
    <property type="term" value="C:nucleolus"/>
    <property type="evidence" value="ECO:0007669"/>
    <property type="project" value="UniProtKB-SubCell"/>
</dbReference>
<dbReference type="GO" id="GO:0005524">
    <property type="term" value="F:ATP binding"/>
    <property type="evidence" value="ECO:0007669"/>
    <property type="project" value="UniProtKB-KW"/>
</dbReference>
<dbReference type="GO" id="GO:0016887">
    <property type="term" value="F:ATP hydrolysis activity"/>
    <property type="evidence" value="ECO:0007669"/>
    <property type="project" value="RHEA"/>
</dbReference>
<dbReference type="GO" id="GO:0003723">
    <property type="term" value="F:RNA binding"/>
    <property type="evidence" value="ECO:0007669"/>
    <property type="project" value="UniProtKB-KW"/>
</dbReference>
<dbReference type="GO" id="GO:0003724">
    <property type="term" value="F:RNA helicase activity"/>
    <property type="evidence" value="ECO:0007669"/>
    <property type="project" value="UniProtKB-EC"/>
</dbReference>
<dbReference type="GO" id="GO:0030490">
    <property type="term" value="P:maturation of SSU-rRNA"/>
    <property type="evidence" value="ECO:0000318"/>
    <property type="project" value="GO_Central"/>
</dbReference>
<dbReference type="CDD" id="cd17957">
    <property type="entry name" value="DEADc_DDX52"/>
    <property type="match status" value="1"/>
</dbReference>
<dbReference type="CDD" id="cd18787">
    <property type="entry name" value="SF2_C_DEAD"/>
    <property type="match status" value="1"/>
</dbReference>
<dbReference type="Gene3D" id="3.40.50.300">
    <property type="entry name" value="P-loop containing nucleotide triphosphate hydrolases"/>
    <property type="match status" value="2"/>
</dbReference>
<dbReference type="InterPro" id="IPR044764">
    <property type="entry name" value="DDX52/Rok1_DEADc"/>
</dbReference>
<dbReference type="InterPro" id="IPR011545">
    <property type="entry name" value="DEAD/DEAH_box_helicase_dom"/>
</dbReference>
<dbReference type="InterPro" id="IPR050079">
    <property type="entry name" value="DEAD_box_RNA_helicase"/>
</dbReference>
<dbReference type="InterPro" id="IPR014001">
    <property type="entry name" value="Helicase_ATP-bd"/>
</dbReference>
<dbReference type="InterPro" id="IPR001650">
    <property type="entry name" value="Helicase_C-like"/>
</dbReference>
<dbReference type="InterPro" id="IPR027417">
    <property type="entry name" value="P-loop_NTPase"/>
</dbReference>
<dbReference type="PANTHER" id="PTHR47959">
    <property type="entry name" value="ATP-DEPENDENT RNA HELICASE RHLE-RELATED"/>
    <property type="match status" value="1"/>
</dbReference>
<dbReference type="PANTHER" id="PTHR47959:SF15">
    <property type="entry name" value="RNA HELICASE"/>
    <property type="match status" value="1"/>
</dbReference>
<dbReference type="Pfam" id="PF00270">
    <property type="entry name" value="DEAD"/>
    <property type="match status" value="1"/>
</dbReference>
<dbReference type="Pfam" id="PF00271">
    <property type="entry name" value="Helicase_C"/>
    <property type="match status" value="1"/>
</dbReference>
<dbReference type="SMART" id="SM00487">
    <property type="entry name" value="DEXDc"/>
    <property type="match status" value="1"/>
</dbReference>
<dbReference type="SMART" id="SM00490">
    <property type="entry name" value="HELICc"/>
    <property type="match status" value="1"/>
</dbReference>
<dbReference type="SUPFAM" id="SSF52540">
    <property type="entry name" value="P-loop containing nucleoside triphosphate hydrolases"/>
    <property type="match status" value="1"/>
</dbReference>
<dbReference type="PROSITE" id="PS51192">
    <property type="entry name" value="HELICASE_ATP_BIND_1"/>
    <property type="match status" value="1"/>
</dbReference>
<dbReference type="PROSITE" id="PS51194">
    <property type="entry name" value="HELICASE_CTER"/>
    <property type="match status" value="1"/>
</dbReference>
<dbReference type="PROSITE" id="PS51195">
    <property type="entry name" value="Q_MOTIF"/>
    <property type="match status" value="1"/>
</dbReference>
<reference key="1">
    <citation type="journal article" date="2005" name="Nature">
        <title>Genomic sequence of the pathogenic and allergenic filamentous fungus Aspergillus fumigatus.</title>
        <authorList>
            <person name="Nierman W.C."/>
            <person name="Pain A."/>
            <person name="Anderson M.J."/>
            <person name="Wortman J.R."/>
            <person name="Kim H.S."/>
            <person name="Arroyo J."/>
            <person name="Berriman M."/>
            <person name="Abe K."/>
            <person name="Archer D.B."/>
            <person name="Bermejo C."/>
            <person name="Bennett J.W."/>
            <person name="Bowyer P."/>
            <person name="Chen D."/>
            <person name="Collins M."/>
            <person name="Coulsen R."/>
            <person name="Davies R."/>
            <person name="Dyer P.S."/>
            <person name="Farman M.L."/>
            <person name="Fedorova N."/>
            <person name="Fedorova N.D."/>
            <person name="Feldblyum T.V."/>
            <person name="Fischer R."/>
            <person name="Fosker N."/>
            <person name="Fraser A."/>
            <person name="Garcia J.L."/>
            <person name="Garcia M.J."/>
            <person name="Goble A."/>
            <person name="Goldman G.H."/>
            <person name="Gomi K."/>
            <person name="Griffith-Jones S."/>
            <person name="Gwilliam R."/>
            <person name="Haas B.J."/>
            <person name="Haas H."/>
            <person name="Harris D.E."/>
            <person name="Horiuchi H."/>
            <person name="Huang J."/>
            <person name="Humphray S."/>
            <person name="Jimenez J."/>
            <person name="Keller N."/>
            <person name="Khouri H."/>
            <person name="Kitamoto K."/>
            <person name="Kobayashi T."/>
            <person name="Konzack S."/>
            <person name="Kulkarni R."/>
            <person name="Kumagai T."/>
            <person name="Lafton A."/>
            <person name="Latge J.-P."/>
            <person name="Li W."/>
            <person name="Lord A."/>
            <person name="Lu C."/>
            <person name="Majoros W.H."/>
            <person name="May G.S."/>
            <person name="Miller B.L."/>
            <person name="Mohamoud Y."/>
            <person name="Molina M."/>
            <person name="Monod M."/>
            <person name="Mouyna I."/>
            <person name="Mulligan S."/>
            <person name="Murphy L.D."/>
            <person name="O'Neil S."/>
            <person name="Paulsen I."/>
            <person name="Penalva M.A."/>
            <person name="Pertea M."/>
            <person name="Price C."/>
            <person name="Pritchard B.L."/>
            <person name="Quail M.A."/>
            <person name="Rabbinowitsch E."/>
            <person name="Rawlins N."/>
            <person name="Rajandream M.A."/>
            <person name="Reichard U."/>
            <person name="Renauld H."/>
            <person name="Robson G.D."/>
            <person name="Rodriguez de Cordoba S."/>
            <person name="Rodriguez-Pena J.M."/>
            <person name="Ronning C.M."/>
            <person name="Rutter S."/>
            <person name="Salzberg S.L."/>
            <person name="Sanchez M."/>
            <person name="Sanchez-Ferrero J.C."/>
            <person name="Saunders D."/>
            <person name="Seeger K."/>
            <person name="Squares R."/>
            <person name="Squares S."/>
            <person name="Takeuchi M."/>
            <person name="Tekaia F."/>
            <person name="Turner G."/>
            <person name="Vazquez de Aldana C.R."/>
            <person name="Weidman J."/>
            <person name="White O."/>
            <person name="Woodward J.R."/>
            <person name="Yu J.-H."/>
            <person name="Fraser C.M."/>
            <person name="Galagan J.E."/>
            <person name="Asai K."/>
            <person name="Machida M."/>
            <person name="Hall N."/>
            <person name="Barrell B.G."/>
            <person name="Denning D.W."/>
        </authorList>
    </citation>
    <scope>NUCLEOTIDE SEQUENCE [LARGE SCALE GENOMIC DNA]</scope>
    <source>
        <strain>ATCC MYA-4609 / CBS 101355 / FGSC A1100 / Af293</strain>
    </source>
</reference>
<name>ROK1_ASPFU</name>
<gene>
    <name type="primary">rok1</name>
    <name type="ORF">AFUA_1G16290</name>
</gene>